<accession>Q74ZS6</accession>
<feature type="chain" id="PRO_0000295378" description="Polyadenylate-binding protein, cytoplasmic and nuclear">
    <location>
        <begin position="1"/>
        <end position="585"/>
    </location>
</feature>
<feature type="domain" description="RRM 1" evidence="2">
    <location>
        <begin position="38"/>
        <end position="116"/>
    </location>
</feature>
<feature type="domain" description="RRM 2" evidence="2">
    <location>
        <begin position="126"/>
        <end position="203"/>
    </location>
</feature>
<feature type="domain" description="RRM 3" evidence="2">
    <location>
        <begin position="219"/>
        <end position="296"/>
    </location>
</feature>
<feature type="domain" description="RRM 4" evidence="2">
    <location>
        <begin position="322"/>
        <end position="399"/>
    </location>
</feature>
<feature type="domain" description="PABC" evidence="3">
    <location>
        <begin position="488"/>
        <end position="567"/>
    </location>
</feature>
<feature type="region of interest" description="Disordered" evidence="4">
    <location>
        <begin position="14"/>
        <end position="37"/>
    </location>
</feature>
<organism>
    <name type="scientific">Eremothecium gossypii (strain ATCC 10895 / CBS 109.51 / FGSC 9923 / NRRL Y-1056)</name>
    <name type="common">Yeast</name>
    <name type="synonym">Ashbya gossypii</name>
    <dbReference type="NCBI Taxonomy" id="284811"/>
    <lineage>
        <taxon>Eukaryota</taxon>
        <taxon>Fungi</taxon>
        <taxon>Dikarya</taxon>
        <taxon>Ascomycota</taxon>
        <taxon>Saccharomycotina</taxon>
        <taxon>Saccharomycetes</taxon>
        <taxon>Saccharomycetales</taxon>
        <taxon>Saccharomycetaceae</taxon>
        <taxon>Eremothecium</taxon>
    </lineage>
</organism>
<protein>
    <recommendedName>
        <fullName>Polyadenylate-binding protein, cytoplasmic and nuclear</fullName>
        <shortName>PABP</shortName>
        <shortName>Poly(A)-binding protein</shortName>
    </recommendedName>
    <alternativeName>
        <fullName>Polyadenylate tail-binding protein</fullName>
    </alternativeName>
</protein>
<gene>
    <name type="primary">PAB1</name>
    <name type="ordered locus">AGR122C</name>
    <name type="ORF">AGOS_AGR122C</name>
</gene>
<proteinExistence type="inferred from homology"/>
<name>PABP_EREGS</name>
<evidence type="ECO:0000250" key="1"/>
<evidence type="ECO:0000255" key="2">
    <source>
        <dbReference type="PROSITE-ProRule" id="PRU00176"/>
    </source>
</evidence>
<evidence type="ECO:0000255" key="3">
    <source>
        <dbReference type="PROSITE-ProRule" id="PRU00641"/>
    </source>
</evidence>
<evidence type="ECO:0000256" key="4">
    <source>
        <dbReference type="SAM" id="MobiDB-lite"/>
    </source>
</evidence>
<evidence type="ECO:0000305" key="5"/>
<reference key="1">
    <citation type="journal article" date="2004" name="Science">
        <title>The Ashbya gossypii genome as a tool for mapping the ancient Saccharomyces cerevisiae genome.</title>
        <authorList>
            <person name="Dietrich F.S."/>
            <person name="Voegeli S."/>
            <person name="Brachat S."/>
            <person name="Lerch A."/>
            <person name="Gates K."/>
            <person name="Steiner S."/>
            <person name="Mohr C."/>
            <person name="Poehlmann R."/>
            <person name="Luedi P."/>
            <person name="Choi S."/>
            <person name="Wing R.A."/>
            <person name="Flavier A."/>
            <person name="Gaffney T.D."/>
            <person name="Philippsen P."/>
        </authorList>
    </citation>
    <scope>NUCLEOTIDE SEQUENCE [LARGE SCALE GENOMIC DNA]</scope>
    <source>
        <strain>ATCC 10895 / CBS 109.51 / FGSC 9923 / NRRL Y-1056</strain>
    </source>
</reference>
<reference key="2">
    <citation type="journal article" date="2013" name="G3 (Bethesda)">
        <title>Genomes of Ashbya fungi isolated from insects reveal four mating-type loci, numerous translocations, lack of transposons, and distinct gene duplications.</title>
        <authorList>
            <person name="Dietrich F.S."/>
            <person name="Voegeli S."/>
            <person name="Kuo S."/>
            <person name="Philippsen P."/>
        </authorList>
    </citation>
    <scope>GENOME REANNOTATION</scope>
    <source>
        <strain>ATCC 10895 / CBS 109.51 / FGSC 9923 / NRRL Y-1056</strain>
    </source>
</reference>
<keyword id="KW-0963">Cytoplasm</keyword>
<keyword id="KW-0507">mRNA processing</keyword>
<keyword id="KW-0509">mRNA transport</keyword>
<keyword id="KW-0539">Nucleus</keyword>
<keyword id="KW-1185">Reference proteome</keyword>
<keyword id="KW-0677">Repeat</keyword>
<keyword id="KW-0694">RNA-binding</keyword>
<keyword id="KW-0810">Translation regulation</keyword>
<keyword id="KW-0813">Transport</keyword>
<sequence>MSDITDKTAEQLEQLKIEEQTAPTTTESETPKVETSGASLYVGELEPTVSEALLYDIFSPIGSVSSIRVCRDAITNTSLGYAYVNFHDHEAGPKAIEQLNYTLIKGKPCRIMWSQRDPSLRKKGSGNIYIKNLHPAIDNKSLHETFSTFGNILSCKVATDENGVSRGFGFVHFENESDARDAIEAVDGMLMNDQEVYVALHVSKKDRQSKLEEVKAKFTNVYVKNIDQETSQEEFEELFGKYGKITSAVLEKDSEGKLRGFGFVNFEDHAAAAKAVDELNELEFKGQKLYVGRAQKKYERLQELKKQYEAARLEKLAKYQGVNLFVKNLDDSIDDEKLKEEFAPFGTITSAKVMRDETGNSRGFGFVCFSTPEEATKAITEKNQQIVAGKPLYVAIAQRKEVRRNQLAQQIQARNQMRFQHANAAAAAAVAGLPGQFMPPPMYYGGIPPRVPFQGPNPQMAGMPKNGAMPPQQFGRPGPMYGGFAPQGQFPRNGQQQQFYQQKQRQALGEQLYQKVFAKTQDDEAAGKITGMILDLPPQQVIQLLENDELLEQHFQEAHAAYQKFKEDQEAQAAAAAAAAADARE</sequence>
<comment type="function">
    <text evidence="1">Binds the poly(A) tail of mRNA. Appears to be an important mediator of the multiple roles of the poly(A) tail in mRNA biogenesis, stability and translation. In the nucleus, involved in both mRNA cleavage and polyadenylation. Is also required for efficient mRNA export to the cytoplasm. Acts in concert with a poly(A)-specific nuclease (PAN) to affect poly(A) tail shortening, which may occur concomitantly with either nucleocytoplasmic mRNA transport or translational initiation. In the cytoplasm, stimulates translation initiation and regulates mRNA decay through translation termination-coupled poly(A) shortening, probably mediated by PAN (By similarity).</text>
</comment>
<comment type="subcellular location">
    <subcellularLocation>
        <location evidence="1">Cytoplasm</location>
    </subcellularLocation>
    <subcellularLocation>
        <location evidence="1">Nucleus</location>
    </subcellularLocation>
</comment>
<comment type="similarity">
    <text evidence="5">Belongs to the polyadenylate-binding protein type-1 family.</text>
</comment>
<dbReference type="EMBL" id="AE016820">
    <property type="protein sequence ID" value="AAS54612.1"/>
    <property type="molecule type" value="Genomic_DNA"/>
</dbReference>
<dbReference type="RefSeq" id="NP_986788.1">
    <property type="nucleotide sequence ID" value="NM_211850.1"/>
</dbReference>
<dbReference type="SMR" id="Q74ZS6"/>
<dbReference type="FunCoup" id="Q74ZS6">
    <property type="interactions" value="1508"/>
</dbReference>
<dbReference type="STRING" id="284811.Q74ZS6"/>
<dbReference type="EnsemblFungi" id="AAS54612">
    <property type="protein sequence ID" value="AAS54612"/>
    <property type="gene ID" value="AGOS_AGR122C"/>
</dbReference>
<dbReference type="GeneID" id="4623090"/>
<dbReference type="KEGG" id="ago:AGOS_AGR122C"/>
<dbReference type="eggNOG" id="KOG0123">
    <property type="taxonomic scope" value="Eukaryota"/>
</dbReference>
<dbReference type="HOGENOM" id="CLU_012062_22_4_1"/>
<dbReference type="InParanoid" id="Q74ZS6"/>
<dbReference type="OMA" id="NATYSMA"/>
<dbReference type="OrthoDB" id="19742at2759"/>
<dbReference type="Proteomes" id="UP000000591">
    <property type="component" value="Chromosome VII"/>
</dbReference>
<dbReference type="GO" id="GO:0010494">
    <property type="term" value="C:cytoplasmic stress granule"/>
    <property type="evidence" value="ECO:0000318"/>
    <property type="project" value="GO_Central"/>
</dbReference>
<dbReference type="GO" id="GO:0005829">
    <property type="term" value="C:cytosol"/>
    <property type="evidence" value="ECO:0000318"/>
    <property type="project" value="GO_Central"/>
</dbReference>
<dbReference type="GO" id="GO:0005634">
    <property type="term" value="C:nucleus"/>
    <property type="evidence" value="ECO:0000318"/>
    <property type="project" value="GO_Central"/>
</dbReference>
<dbReference type="GO" id="GO:0071014">
    <property type="term" value="C:post-mRNA release spliceosomal complex"/>
    <property type="evidence" value="ECO:0007669"/>
    <property type="project" value="EnsemblFungi"/>
</dbReference>
<dbReference type="GO" id="GO:1990904">
    <property type="term" value="C:ribonucleoprotein complex"/>
    <property type="evidence" value="ECO:0000318"/>
    <property type="project" value="GO_Central"/>
</dbReference>
<dbReference type="GO" id="GO:0005840">
    <property type="term" value="C:ribosome"/>
    <property type="evidence" value="ECO:0007669"/>
    <property type="project" value="EnsemblFungi"/>
</dbReference>
<dbReference type="GO" id="GO:0140693">
    <property type="term" value="F:molecular condensate scaffold activity"/>
    <property type="evidence" value="ECO:0007669"/>
    <property type="project" value="EnsemblFungi"/>
</dbReference>
<dbReference type="GO" id="GO:0003730">
    <property type="term" value="F:mRNA 3'-UTR binding"/>
    <property type="evidence" value="ECO:0000318"/>
    <property type="project" value="GO_Central"/>
</dbReference>
<dbReference type="GO" id="GO:0008143">
    <property type="term" value="F:poly(A) binding"/>
    <property type="evidence" value="ECO:0000318"/>
    <property type="project" value="GO_Central"/>
</dbReference>
<dbReference type="GO" id="GO:0008266">
    <property type="term" value="F:poly(U) RNA binding"/>
    <property type="evidence" value="ECO:0000318"/>
    <property type="project" value="GO_Central"/>
</dbReference>
<dbReference type="GO" id="GO:1990841">
    <property type="term" value="F:promoter-specific chromatin binding"/>
    <property type="evidence" value="ECO:0007669"/>
    <property type="project" value="EnsemblFungi"/>
</dbReference>
<dbReference type="GO" id="GO:0008428">
    <property type="term" value="F:ribonuclease inhibitor activity"/>
    <property type="evidence" value="ECO:0007669"/>
    <property type="project" value="EnsemblFungi"/>
</dbReference>
<dbReference type="GO" id="GO:0031124">
    <property type="term" value="P:mRNA 3'-end processing"/>
    <property type="evidence" value="ECO:0007669"/>
    <property type="project" value="EnsemblFungi"/>
</dbReference>
<dbReference type="GO" id="GO:0051028">
    <property type="term" value="P:mRNA transport"/>
    <property type="evidence" value="ECO:0007669"/>
    <property type="project" value="UniProtKB-KW"/>
</dbReference>
<dbReference type="GO" id="GO:0000289">
    <property type="term" value="P:nuclear-transcribed mRNA poly(A) tail shortening"/>
    <property type="evidence" value="ECO:0007669"/>
    <property type="project" value="EnsemblFungi"/>
</dbReference>
<dbReference type="GO" id="GO:0060211">
    <property type="term" value="P:regulation of nuclear-transcribed mRNA poly(A) tail shortening"/>
    <property type="evidence" value="ECO:0007669"/>
    <property type="project" value="EnsemblFungi"/>
</dbReference>
<dbReference type="GO" id="GO:0006446">
    <property type="term" value="P:regulation of translational initiation"/>
    <property type="evidence" value="ECO:0007669"/>
    <property type="project" value="EnsemblFungi"/>
</dbReference>
<dbReference type="CDD" id="cd12378">
    <property type="entry name" value="RRM1_I_PABPs"/>
    <property type="match status" value="1"/>
</dbReference>
<dbReference type="CDD" id="cd12379">
    <property type="entry name" value="RRM2_I_PABPs"/>
    <property type="match status" value="1"/>
</dbReference>
<dbReference type="CDD" id="cd12380">
    <property type="entry name" value="RRM3_I_PABPs"/>
    <property type="match status" value="1"/>
</dbReference>
<dbReference type="CDD" id="cd12381">
    <property type="entry name" value="RRM4_I_PABPs"/>
    <property type="match status" value="1"/>
</dbReference>
<dbReference type="FunFam" id="3.30.70.330:FF:000003">
    <property type="entry name" value="Polyadenylate-binding protein"/>
    <property type="match status" value="1"/>
</dbReference>
<dbReference type="FunFam" id="3.30.70.330:FF:000211">
    <property type="entry name" value="Polyadenylate-binding protein"/>
    <property type="match status" value="1"/>
</dbReference>
<dbReference type="FunFam" id="3.30.70.330:FF:000355">
    <property type="entry name" value="Polyadenylate-binding protein"/>
    <property type="match status" value="1"/>
</dbReference>
<dbReference type="FunFam" id="3.30.70.330:FF:000590">
    <property type="entry name" value="Polyadenylate-binding protein 5"/>
    <property type="match status" value="1"/>
</dbReference>
<dbReference type="Gene3D" id="3.30.70.330">
    <property type="match status" value="4"/>
</dbReference>
<dbReference type="Gene3D" id="1.10.1900.10">
    <property type="entry name" value="c-terminal domain of poly(a) binding protein"/>
    <property type="match status" value="1"/>
</dbReference>
<dbReference type="InterPro" id="IPR012677">
    <property type="entry name" value="Nucleotide-bd_a/b_plait_sf"/>
</dbReference>
<dbReference type="InterPro" id="IPR036053">
    <property type="entry name" value="PABP-dom"/>
</dbReference>
<dbReference type="InterPro" id="IPR006515">
    <property type="entry name" value="PABP_1234"/>
</dbReference>
<dbReference type="InterPro" id="IPR002004">
    <property type="entry name" value="PABP_HYD_C"/>
</dbReference>
<dbReference type="InterPro" id="IPR034364">
    <property type="entry name" value="PABP_RRM1"/>
</dbReference>
<dbReference type="InterPro" id="IPR035979">
    <property type="entry name" value="RBD_domain_sf"/>
</dbReference>
<dbReference type="InterPro" id="IPR045305">
    <property type="entry name" value="RRM2_I_PABPs"/>
</dbReference>
<dbReference type="InterPro" id="IPR000504">
    <property type="entry name" value="RRM_dom"/>
</dbReference>
<dbReference type="InterPro" id="IPR003954">
    <property type="entry name" value="RRM_dom_euk"/>
</dbReference>
<dbReference type="NCBIfam" id="TIGR01628">
    <property type="entry name" value="PABP-1234"/>
    <property type="match status" value="1"/>
</dbReference>
<dbReference type="PANTHER" id="PTHR24012">
    <property type="entry name" value="RNA BINDING PROTEIN"/>
    <property type="match status" value="1"/>
</dbReference>
<dbReference type="Pfam" id="PF00658">
    <property type="entry name" value="MLLE"/>
    <property type="match status" value="1"/>
</dbReference>
<dbReference type="Pfam" id="PF00076">
    <property type="entry name" value="RRM_1"/>
    <property type="match status" value="4"/>
</dbReference>
<dbReference type="SMART" id="SM00517">
    <property type="entry name" value="PolyA"/>
    <property type="match status" value="1"/>
</dbReference>
<dbReference type="SMART" id="SM00360">
    <property type="entry name" value="RRM"/>
    <property type="match status" value="4"/>
</dbReference>
<dbReference type="SMART" id="SM00361">
    <property type="entry name" value="RRM_1"/>
    <property type="match status" value="4"/>
</dbReference>
<dbReference type="SUPFAM" id="SSF63570">
    <property type="entry name" value="PABC (PABP) domain"/>
    <property type="match status" value="1"/>
</dbReference>
<dbReference type="SUPFAM" id="SSF54928">
    <property type="entry name" value="RNA-binding domain, RBD"/>
    <property type="match status" value="2"/>
</dbReference>
<dbReference type="PROSITE" id="PS51309">
    <property type="entry name" value="PABC"/>
    <property type="match status" value="1"/>
</dbReference>
<dbReference type="PROSITE" id="PS50102">
    <property type="entry name" value="RRM"/>
    <property type="match status" value="4"/>
</dbReference>